<reference key="1">
    <citation type="journal article" date="1993" name="J. Gen. Microbiol.">
        <title>Sequencing and analysis of the divergon comprising gtaB, the structural gene of UDP-glucose pyrophosphorylase of Bacillus subtilis 168.</title>
        <authorList>
            <person name="Soldo B."/>
            <person name="Lazarevic V."/>
            <person name="Margot P."/>
            <person name="Karamata D."/>
        </authorList>
    </citation>
    <scope>NUCLEOTIDE SEQUENCE [GENOMIC DNA]</scope>
    <source>
        <strain>168</strain>
    </source>
</reference>
<reference key="2">
    <citation type="journal article" date="2002" name="J. Bacteriol.">
        <title>Characterization of a Bacillus subtilis thermosensitive teichoic acid-deficient mutant: gene mnaA (yvyH) encodes the UDP-N-acetylglucosamine 2-epimerase.</title>
        <authorList>
            <person name="Soldo B."/>
            <person name="Lazarevic V."/>
            <person name="Pooley H.M."/>
            <person name="Karamata D."/>
        </authorList>
    </citation>
    <scope>NUCLEOTIDE SEQUENCE [GENOMIC DNA]</scope>
    <scope>FUNCTION</scope>
    <scope>MUTAGENESIS OF THR-69 AND PRO-374</scope>
</reference>
<reference key="3">
    <citation type="journal article" date="1997" name="Nature">
        <title>The complete genome sequence of the Gram-positive bacterium Bacillus subtilis.</title>
        <authorList>
            <person name="Kunst F."/>
            <person name="Ogasawara N."/>
            <person name="Moszer I."/>
            <person name="Albertini A.M."/>
            <person name="Alloni G."/>
            <person name="Azevedo V."/>
            <person name="Bertero M.G."/>
            <person name="Bessieres P."/>
            <person name="Bolotin A."/>
            <person name="Borchert S."/>
            <person name="Borriss R."/>
            <person name="Boursier L."/>
            <person name="Brans A."/>
            <person name="Braun M."/>
            <person name="Brignell S.C."/>
            <person name="Bron S."/>
            <person name="Brouillet S."/>
            <person name="Bruschi C.V."/>
            <person name="Caldwell B."/>
            <person name="Capuano V."/>
            <person name="Carter N.M."/>
            <person name="Choi S.-K."/>
            <person name="Codani J.-J."/>
            <person name="Connerton I.F."/>
            <person name="Cummings N.J."/>
            <person name="Daniel R.A."/>
            <person name="Denizot F."/>
            <person name="Devine K.M."/>
            <person name="Duesterhoeft A."/>
            <person name="Ehrlich S.D."/>
            <person name="Emmerson P.T."/>
            <person name="Entian K.-D."/>
            <person name="Errington J."/>
            <person name="Fabret C."/>
            <person name="Ferrari E."/>
            <person name="Foulger D."/>
            <person name="Fritz C."/>
            <person name="Fujita M."/>
            <person name="Fujita Y."/>
            <person name="Fuma S."/>
            <person name="Galizzi A."/>
            <person name="Galleron N."/>
            <person name="Ghim S.-Y."/>
            <person name="Glaser P."/>
            <person name="Goffeau A."/>
            <person name="Golightly E.J."/>
            <person name="Grandi G."/>
            <person name="Guiseppi G."/>
            <person name="Guy B.J."/>
            <person name="Haga K."/>
            <person name="Haiech J."/>
            <person name="Harwood C.R."/>
            <person name="Henaut A."/>
            <person name="Hilbert H."/>
            <person name="Holsappel S."/>
            <person name="Hosono S."/>
            <person name="Hullo M.-F."/>
            <person name="Itaya M."/>
            <person name="Jones L.-M."/>
            <person name="Joris B."/>
            <person name="Karamata D."/>
            <person name="Kasahara Y."/>
            <person name="Klaerr-Blanchard M."/>
            <person name="Klein C."/>
            <person name="Kobayashi Y."/>
            <person name="Koetter P."/>
            <person name="Koningstein G."/>
            <person name="Krogh S."/>
            <person name="Kumano M."/>
            <person name="Kurita K."/>
            <person name="Lapidus A."/>
            <person name="Lardinois S."/>
            <person name="Lauber J."/>
            <person name="Lazarevic V."/>
            <person name="Lee S.-M."/>
            <person name="Levine A."/>
            <person name="Liu H."/>
            <person name="Masuda S."/>
            <person name="Mauel C."/>
            <person name="Medigue C."/>
            <person name="Medina N."/>
            <person name="Mellado R.P."/>
            <person name="Mizuno M."/>
            <person name="Moestl D."/>
            <person name="Nakai S."/>
            <person name="Noback M."/>
            <person name="Noone D."/>
            <person name="O'Reilly M."/>
            <person name="Ogawa K."/>
            <person name="Ogiwara A."/>
            <person name="Oudega B."/>
            <person name="Park S.-H."/>
            <person name="Parro V."/>
            <person name="Pohl T.M."/>
            <person name="Portetelle D."/>
            <person name="Porwollik S."/>
            <person name="Prescott A.M."/>
            <person name="Presecan E."/>
            <person name="Pujic P."/>
            <person name="Purnelle B."/>
            <person name="Rapoport G."/>
            <person name="Rey M."/>
            <person name="Reynolds S."/>
            <person name="Rieger M."/>
            <person name="Rivolta C."/>
            <person name="Rocha E."/>
            <person name="Roche B."/>
            <person name="Rose M."/>
            <person name="Sadaie Y."/>
            <person name="Sato T."/>
            <person name="Scanlan E."/>
            <person name="Schleich S."/>
            <person name="Schroeter R."/>
            <person name="Scoffone F."/>
            <person name="Sekiguchi J."/>
            <person name="Sekowska A."/>
            <person name="Seror S.J."/>
            <person name="Serror P."/>
            <person name="Shin B.-S."/>
            <person name="Soldo B."/>
            <person name="Sorokin A."/>
            <person name="Tacconi E."/>
            <person name="Takagi T."/>
            <person name="Takahashi H."/>
            <person name="Takemaru K."/>
            <person name="Takeuchi M."/>
            <person name="Tamakoshi A."/>
            <person name="Tanaka T."/>
            <person name="Terpstra P."/>
            <person name="Tognoni A."/>
            <person name="Tosato V."/>
            <person name="Uchiyama S."/>
            <person name="Vandenbol M."/>
            <person name="Vannier F."/>
            <person name="Vassarotti A."/>
            <person name="Viari A."/>
            <person name="Wambutt R."/>
            <person name="Wedler E."/>
            <person name="Wedler H."/>
            <person name="Weitzenegger T."/>
            <person name="Winters P."/>
            <person name="Wipat A."/>
            <person name="Yamamoto H."/>
            <person name="Yamane K."/>
            <person name="Yasumoto K."/>
            <person name="Yata K."/>
            <person name="Yoshida K."/>
            <person name="Yoshikawa H.-F."/>
            <person name="Zumstein E."/>
            <person name="Yoshikawa H."/>
            <person name="Danchin A."/>
        </authorList>
    </citation>
    <scope>NUCLEOTIDE SEQUENCE [LARGE SCALE GENOMIC DNA]</scope>
    <source>
        <strain>168</strain>
    </source>
</reference>
<sequence length="380" mass="42634">MKKLKVMTVFGTRPEAIKMAPLVLELKKYPEIDSYVTVTAQHRQMLDQVLDAFHIKPDFDLNIMKERQTLAEITSNALVRLDELFKDIKPDIVLVHGDTTTTFAGSLAAFYHQIAVGHVEAGLRTGNKYSPFPEELNRQMTGAIADLHFAPTGQAKDNLLKENKKADSIFVTGNTAIDALNTTVRDGYSHPVLDQVGEDKMILLTAHRRENLGEPMENMFKAIRRIVGEFEDVQVVYPVHLNPVVREAAHKHFGDSDRVHLIEPLEVIDFHNFAAKSHFILTDSGGVQEEAPSLGKPVLVLRDTTERPEGVEAGTLKLAGTDEENIYQLAKQLLTDPDEYKKMSQASNPYGDGEASRRIVEELLFHYGYRKEQPDSFTGK</sequence>
<feature type="chain" id="PRO_0000208532" description="UDP-N-acetylglucosamine 2-epimerase">
    <location>
        <begin position="1"/>
        <end position="380"/>
    </location>
</feature>
<feature type="mutagenesis site" description="In TS-21; temperature-sensitive, develops, at the nonpermissive temperature (47 degrees Celsius), a coccoid-like morphology, i.e. a phenotype associated with a deficient synthesis of poly(glycerol phosphate) teichoic acid." evidence="2">
    <original>T</original>
    <variation>I</variation>
    <location>
        <position position="69"/>
    </location>
</feature>
<feature type="mutagenesis site" description="In TS-21; temperature-sensitive, develops, at the nonpermissive temperature (47 degrees Celsius), a coccoid-like morphology, i.e. a phenotype associated with a deficient synthesis of poly(glycerol phosphate) teichoic acid." evidence="2">
    <original>P</original>
    <variation>L</variation>
    <location>
        <position position="374"/>
    </location>
</feature>
<feature type="strand" evidence="4">
    <location>
        <begin position="4"/>
        <end position="10"/>
    </location>
</feature>
<feature type="helix" evidence="4">
    <location>
        <begin position="13"/>
        <end position="26"/>
    </location>
</feature>
<feature type="strand" evidence="4">
    <location>
        <begin position="32"/>
        <end position="38"/>
    </location>
</feature>
<feature type="strand" evidence="4">
    <location>
        <begin position="41"/>
        <end position="43"/>
    </location>
</feature>
<feature type="helix" evidence="4">
    <location>
        <begin position="44"/>
        <end position="53"/>
    </location>
</feature>
<feature type="strand" evidence="4">
    <location>
        <begin position="58"/>
        <end position="60"/>
    </location>
</feature>
<feature type="helix" evidence="4">
    <location>
        <begin position="70"/>
        <end position="87"/>
    </location>
</feature>
<feature type="strand" evidence="4">
    <location>
        <begin position="91"/>
        <end position="96"/>
    </location>
</feature>
<feature type="helix" evidence="4">
    <location>
        <begin position="100"/>
        <end position="111"/>
    </location>
</feature>
<feature type="strand" evidence="4">
    <location>
        <begin position="115"/>
        <end position="119"/>
    </location>
</feature>
<feature type="turn" evidence="4">
    <location>
        <begin position="128"/>
        <end position="133"/>
    </location>
</feature>
<feature type="helix" evidence="4">
    <location>
        <begin position="134"/>
        <end position="144"/>
    </location>
</feature>
<feature type="strand" evidence="4">
    <location>
        <begin position="146"/>
        <end position="152"/>
    </location>
</feature>
<feature type="helix" evidence="4">
    <location>
        <begin position="153"/>
        <end position="161"/>
    </location>
</feature>
<feature type="helix" evidence="4">
    <location>
        <begin position="166"/>
        <end position="168"/>
    </location>
</feature>
<feature type="strand" evidence="4">
    <location>
        <begin position="169"/>
        <end position="171"/>
    </location>
</feature>
<feature type="helix" evidence="4">
    <location>
        <begin position="175"/>
        <end position="183"/>
    </location>
</feature>
<feature type="helix" evidence="4">
    <location>
        <begin position="191"/>
        <end position="196"/>
    </location>
</feature>
<feature type="strand" evidence="4">
    <location>
        <begin position="199"/>
        <end position="205"/>
    </location>
</feature>
<feature type="helix" evidence="4">
    <location>
        <begin position="209"/>
        <end position="211"/>
    </location>
</feature>
<feature type="helix" evidence="4">
    <location>
        <begin position="214"/>
        <end position="229"/>
    </location>
</feature>
<feature type="strand" evidence="4">
    <location>
        <begin position="233"/>
        <end position="238"/>
    </location>
</feature>
<feature type="helix" evidence="4">
    <location>
        <begin position="243"/>
        <end position="253"/>
    </location>
</feature>
<feature type="strand" evidence="4">
    <location>
        <begin position="259"/>
        <end position="262"/>
    </location>
</feature>
<feature type="helix" evidence="4">
    <location>
        <begin position="267"/>
        <end position="276"/>
    </location>
</feature>
<feature type="strand" evidence="4">
    <location>
        <begin position="278"/>
        <end position="282"/>
    </location>
</feature>
<feature type="helix" evidence="4">
    <location>
        <begin position="285"/>
        <end position="294"/>
    </location>
</feature>
<feature type="strand" evidence="4">
    <location>
        <begin position="298"/>
        <end position="300"/>
    </location>
</feature>
<feature type="helix" evidence="4">
    <location>
        <begin position="308"/>
        <end position="312"/>
    </location>
</feature>
<feature type="strand" evidence="4">
    <location>
        <begin position="315"/>
        <end position="318"/>
    </location>
</feature>
<feature type="helix" evidence="4">
    <location>
        <begin position="323"/>
        <end position="335"/>
    </location>
</feature>
<feature type="helix" evidence="4">
    <location>
        <begin position="337"/>
        <end position="343"/>
    </location>
</feature>
<feature type="helix" evidence="4">
    <location>
        <begin position="355"/>
        <end position="366"/>
    </location>
</feature>
<name>MNAA_BACSU</name>
<keyword id="KW-0002">3D-structure</keyword>
<keyword id="KW-0961">Cell wall biogenesis/degradation</keyword>
<keyword id="KW-0963">Cytoplasm</keyword>
<keyword id="KW-0413">Isomerase</keyword>
<keyword id="KW-1185">Reference proteome</keyword>
<keyword id="KW-0777">Teichoic acid biosynthesis</keyword>
<evidence type="ECO:0000250" key="1"/>
<evidence type="ECO:0000269" key="2">
    <source>
    </source>
</evidence>
<evidence type="ECO:0000305" key="3"/>
<evidence type="ECO:0007829" key="4">
    <source>
        <dbReference type="PDB" id="4FKZ"/>
    </source>
</evidence>
<comment type="function">
    <text evidence="2">Catalyzes the conversion of UDP-N-acetylglucosamine into UDP-N-acetylmannosamine, a precursor of the teichoic acid linkage unit.</text>
</comment>
<comment type="catalytic activity">
    <reaction>
        <text>UDP-N-acetyl-alpha-D-glucosamine = UDP-N-acetyl-alpha-D-mannosamine</text>
        <dbReference type="Rhea" id="RHEA:17213"/>
        <dbReference type="ChEBI" id="CHEBI:57705"/>
        <dbReference type="ChEBI" id="CHEBI:68623"/>
        <dbReference type="EC" id="5.1.3.14"/>
    </reaction>
</comment>
<comment type="pathway">
    <text>Cell wall biogenesis; poly(glycerol phosphate) teichoic acid biosynthesis.</text>
</comment>
<comment type="subcellular location">
    <subcellularLocation>
        <location evidence="1">Cytoplasm</location>
    </subcellularLocation>
</comment>
<comment type="similarity">
    <text evidence="3">Belongs to the UDP-N-acetylglucosamine 2-epimerase family.</text>
</comment>
<protein>
    <recommendedName>
        <fullName>UDP-N-acetylglucosamine 2-epimerase</fullName>
        <ecNumber>5.1.3.14</ecNumber>
    </recommendedName>
    <alternativeName>
        <fullName>UDP-GlcNAc-2-epimerase</fullName>
    </alternativeName>
</protein>
<accession>P39131</accession>
<organism>
    <name type="scientific">Bacillus subtilis (strain 168)</name>
    <dbReference type="NCBI Taxonomy" id="224308"/>
    <lineage>
        <taxon>Bacteria</taxon>
        <taxon>Bacillati</taxon>
        <taxon>Bacillota</taxon>
        <taxon>Bacilli</taxon>
        <taxon>Bacillales</taxon>
        <taxon>Bacillaceae</taxon>
        <taxon>Bacillus</taxon>
    </lineage>
</organism>
<gene>
    <name type="primary">mnaA</name>
    <name type="ordered locus">BSU35660</name>
</gene>
<proteinExistence type="evidence at protein level"/>
<dbReference type="EC" id="5.1.3.14"/>
<dbReference type="EMBL" id="Z22516">
    <property type="protein sequence ID" value="CAA80240.1"/>
    <property type="molecule type" value="Genomic_DNA"/>
</dbReference>
<dbReference type="EMBL" id="AL009126">
    <property type="protein sequence ID" value="CAB15583.1"/>
    <property type="molecule type" value="Genomic_DNA"/>
</dbReference>
<dbReference type="PIR" id="D70049">
    <property type="entry name" value="D70049"/>
</dbReference>
<dbReference type="RefSeq" id="NP_391446.1">
    <property type="nucleotide sequence ID" value="NC_000964.3"/>
</dbReference>
<dbReference type="PDB" id="1O6C">
    <property type="method" value="X-ray"/>
    <property type="resolution" value="2.90 A"/>
    <property type="chains" value="A/B=2-380"/>
</dbReference>
<dbReference type="PDB" id="4FKZ">
    <property type="method" value="X-ray"/>
    <property type="resolution" value="1.69 A"/>
    <property type="chains" value="A/B=1-380"/>
</dbReference>
<dbReference type="PDBsum" id="1O6C"/>
<dbReference type="PDBsum" id="4FKZ"/>
<dbReference type="SMR" id="P39131"/>
<dbReference type="FunCoup" id="P39131">
    <property type="interactions" value="448"/>
</dbReference>
<dbReference type="STRING" id="224308.BSU35660"/>
<dbReference type="jPOST" id="P39131"/>
<dbReference type="PaxDb" id="224308-BSU35660"/>
<dbReference type="EnsemblBacteria" id="CAB15583">
    <property type="protein sequence ID" value="CAB15583"/>
    <property type="gene ID" value="BSU_35660"/>
</dbReference>
<dbReference type="GeneID" id="936209"/>
<dbReference type="KEGG" id="bsu:BSU35660"/>
<dbReference type="PATRIC" id="fig|224308.179.peg.3857"/>
<dbReference type="eggNOG" id="COG0381">
    <property type="taxonomic scope" value="Bacteria"/>
</dbReference>
<dbReference type="InParanoid" id="P39131"/>
<dbReference type="OrthoDB" id="9803238at2"/>
<dbReference type="PhylomeDB" id="P39131"/>
<dbReference type="BioCyc" id="BSUB:BSU35660-MONOMER"/>
<dbReference type="BioCyc" id="MetaCyc:BSU35660-MONOMER"/>
<dbReference type="BRENDA" id="5.1.3.14">
    <property type="organism ID" value="658"/>
</dbReference>
<dbReference type="UniPathway" id="UPA00827"/>
<dbReference type="EvolutionaryTrace" id="P39131"/>
<dbReference type="Proteomes" id="UP000001570">
    <property type="component" value="Chromosome"/>
</dbReference>
<dbReference type="GO" id="GO:0005737">
    <property type="term" value="C:cytoplasm"/>
    <property type="evidence" value="ECO:0007669"/>
    <property type="project" value="UniProtKB-SubCell"/>
</dbReference>
<dbReference type="GO" id="GO:0008761">
    <property type="term" value="F:UDP-N-acetylglucosamine 2-epimerase activity"/>
    <property type="evidence" value="ECO:0007669"/>
    <property type="project" value="UniProtKB-EC"/>
</dbReference>
<dbReference type="GO" id="GO:0071555">
    <property type="term" value="P:cell wall organization"/>
    <property type="evidence" value="ECO:0007669"/>
    <property type="project" value="UniProtKB-KW"/>
</dbReference>
<dbReference type="GO" id="GO:0019350">
    <property type="term" value="P:teichoic acid biosynthetic process"/>
    <property type="evidence" value="ECO:0007669"/>
    <property type="project" value="UniProtKB-KW"/>
</dbReference>
<dbReference type="CDD" id="cd03786">
    <property type="entry name" value="GTB_UDP-GlcNAc_2-Epimerase"/>
    <property type="match status" value="1"/>
</dbReference>
<dbReference type="FunFam" id="3.40.50.2000:FF:000043">
    <property type="entry name" value="UDP-N-acetylglucosamine 2-epimerase"/>
    <property type="match status" value="1"/>
</dbReference>
<dbReference type="Gene3D" id="3.40.50.2000">
    <property type="entry name" value="Glycogen Phosphorylase B"/>
    <property type="match status" value="2"/>
</dbReference>
<dbReference type="InterPro" id="IPR003331">
    <property type="entry name" value="UDP_GlcNAc_Epimerase_2_dom"/>
</dbReference>
<dbReference type="InterPro" id="IPR029767">
    <property type="entry name" value="WecB-like"/>
</dbReference>
<dbReference type="NCBIfam" id="TIGR00236">
    <property type="entry name" value="wecB"/>
    <property type="match status" value="1"/>
</dbReference>
<dbReference type="PANTHER" id="PTHR43174">
    <property type="entry name" value="UDP-N-ACETYLGLUCOSAMINE 2-EPIMERASE"/>
    <property type="match status" value="1"/>
</dbReference>
<dbReference type="PANTHER" id="PTHR43174:SF2">
    <property type="entry name" value="UDP-N-ACETYLGLUCOSAMINE 2-EPIMERASE"/>
    <property type="match status" value="1"/>
</dbReference>
<dbReference type="Pfam" id="PF02350">
    <property type="entry name" value="Epimerase_2"/>
    <property type="match status" value="1"/>
</dbReference>
<dbReference type="SUPFAM" id="SSF53756">
    <property type="entry name" value="UDP-Glycosyltransferase/glycogen phosphorylase"/>
    <property type="match status" value="1"/>
</dbReference>